<reference key="1">
    <citation type="submission" date="2008-01" db="EMBL/GenBank/DDBJ databases">
        <title>Complete sequence of Thermoanaerobacter pseudethanolicus 39E.</title>
        <authorList>
            <person name="Copeland A."/>
            <person name="Lucas S."/>
            <person name="Lapidus A."/>
            <person name="Barry K."/>
            <person name="Glavina del Rio T."/>
            <person name="Dalin E."/>
            <person name="Tice H."/>
            <person name="Pitluck S."/>
            <person name="Bruce D."/>
            <person name="Goodwin L."/>
            <person name="Saunders E."/>
            <person name="Brettin T."/>
            <person name="Detter J.C."/>
            <person name="Han C."/>
            <person name="Schmutz J."/>
            <person name="Larimer F."/>
            <person name="Land M."/>
            <person name="Hauser L."/>
            <person name="Kyrpides N."/>
            <person name="Lykidis A."/>
            <person name="Hemme C."/>
            <person name="Fields M.W."/>
            <person name="He Z."/>
            <person name="Zhou J."/>
            <person name="Richardson P."/>
        </authorList>
    </citation>
    <scope>NUCLEOTIDE SEQUENCE [LARGE SCALE GENOMIC DNA]</scope>
    <source>
        <strain>ATCC 33223 / DSM 2355 / 39E</strain>
    </source>
</reference>
<evidence type="ECO:0000255" key="1">
    <source>
        <dbReference type="HAMAP-Rule" id="MF_01326"/>
    </source>
</evidence>
<evidence type="ECO:0000305" key="2"/>
<proteinExistence type="inferred from homology"/>
<comment type="function">
    <text evidence="1">One of two assembly initiator proteins, it binds directly to the 5'-end of the 23S rRNA, where it nucleates assembly of the 50S subunit.</text>
</comment>
<comment type="function">
    <text evidence="1">One of the proteins that surrounds the polypeptide exit tunnel on the outside of the subunit.</text>
</comment>
<comment type="subunit">
    <text evidence="1">Part of the 50S ribosomal subunit.</text>
</comment>
<comment type="similarity">
    <text evidence="1">Belongs to the universal ribosomal protein uL24 family.</text>
</comment>
<organism>
    <name type="scientific">Thermoanaerobacter pseudethanolicus (strain ATCC 33223 / 39E)</name>
    <name type="common">Clostridium thermohydrosulfuricum</name>
    <dbReference type="NCBI Taxonomy" id="340099"/>
    <lineage>
        <taxon>Bacteria</taxon>
        <taxon>Bacillati</taxon>
        <taxon>Bacillota</taxon>
        <taxon>Clostridia</taxon>
        <taxon>Thermoanaerobacterales</taxon>
        <taxon>Thermoanaerobacteraceae</taxon>
        <taxon>Thermoanaerobacter</taxon>
    </lineage>
</organism>
<sequence length="107" mass="11868">MAQNKLHVKKGDMVVVISGKDKGKKGKVLQAFPKEGKVIVEGVNIVTKHRKATSPQKPGGIIHQEAPIYSSKVMLYCENCGRGVRYGVKVLENGEKIRYCKRCNETL</sequence>
<dbReference type="EMBL" id="CP000924">
    <property type="protein sequence ID" value="ABY94054.1"/>
    <property type="molecule type" value="Genomic_DNA"/>
</dbReference>
<dbReference type="RefSeq" id="WP_003868571.1">
    <property type="nucleotide sequence ID" value="NC_010321.1"/>
</dbReference>
<dbReference type="SMR" id="B0KCL1"/>
<dbReference type="STRING" id="340099.Teth39_0385"/>
<dbReference type="KEGG" id="tpd:Teth39_0385"/>
<dbReference type="eggNOG" id="COG0198">
    <property type="taxonomic scope" value="Bacteria"/>
</dbReference>
<dbReference type="HOGENOM" id="CLU_093315_2_3_9"/>
<dbReference type="Proteomes" id="UP000002156">
    <property type="component" value="Chromosome"/>
</dbReference>
<dbReference type="GO" id="GO:1990904">
    <property type="term" value="C:ribonucleoprotein complex"/>
    <property type="evidence" value="ECO:0007669"/>
    <property type="project" value="UniProtKB-KW"/>
</dbReference>
<dbReference type="GO" id="GO:0005840">
    <property type="term" value="C:ribosome"/>
    <property type="evidence" value="ECO:0007669"/>
    <property type="project" value="UniProtKB-KW"/>
</dbReference>
<dbReference type="GO" id="GO:0019843">
    <property type="term" value="F:rRNA binding"/>
    <property type="evidence" value="ECO:0007669"/>
    <property type="project" value="UniProtKB-UniRule"/>
</dbReference>
<dbReference type="GO" id="GO:0003735">
    <property type="term" value="F:structural constituent of ribosome"/>
    <property type="evidence" value="ECO:0007669"/>
    <property type="project" value="InterPro"/>
</dbReference>
<dbReference type="GO" id="GO:0006412">
    <property type="term" value="P:translation"/>
    <property type="evidence" value="ECO:0007669"/>
    <property type="project" value="UniProtKB-UniRule"/>
</dbReference>
<dbReference type="CDD" id="cd06089">
    <property type="entry name" value="KOW_RPL26"/>
    <property type="match status" value="1"/>
</dbReference>
<dbReference type="FunFam" id="2.30.30.30:FF:000004">
    <property type="entry name" value="50S ribosomal protein L24"/>
    <property type="match status" value="1"/>
</dbReference>
<dbReference type="Gene3D" id="2.30.30.30">
    <property type="match status" value="1"/>
</dbReference>
<dbReference type="HAMAP" id="MF_01326_B">
    <property type="entry name" value="Ribosomal_uL24_B"/>
    <property type="match status" value="1"/>
</dbReference>
<dbReference type="InterPro" id="IPR005824">
    <property type="entry name" value="KOW"/>
</dbReference>
<dbReference type="InterPro" id="IPR014722">
    <property type="entry name" value="Rib_uL2_dom2"/>
</dbReference>
<dbReference type="InterPro" id="IPR003256">
    <property type="entry name" value="Ribosomal_uL24"/>
</dbReference>
<dbReference type="InterPro" id="IPR005825">
    <property type="entry name" value="Ribosomal_uL24_CS"/>
</dbReference>
<dbReference type="InterPro" id="IPR041988">
    <property type="entry name" value="Ribosomal_uL24_KOW"/>
</dbReference>
<dbReference type="InterPro" id="IPR008991">
    <property type="entry name" value="Translation_prot_SH3-like_sf"/>
</dbReference>
<dbReference type="NCBIfam" id="TIGR01079">
    <property type="entry name" value="rplX_bact"/>
    <property type="match status" value="1"/>
</dbReference>
<dbReference type="PANTHER" id="PTHR12903">
    <property type="entry name" value="MITOCHONDRIAL RIBOSOMAL PROTEIN L24"/>
    <property type="match status" value="1"/>
</dbReference>
<dbReference type="Pfam" id="PF00467">
    <property type="entry name" value="KOW"/>
    <property type="match status" value="1"/>
</dbReference>
<dbReference type="Pfam" id="PF17136">
    <property type="entry name" value="ribosomal_L24"/>
    <property type="match status" value="1"/>
</dbReference>
<dbReference type="SMART" id="SM00739">
    <property type="entry name" value="KOW"/>
    <property type="match status" value="1"/>
</dbReference>
<dbReference type="SUPFAM" id="SSF50104">
    <property type="entry name" value="Translation proteins SH3-like domain"/>
    <property type="match status" value="1"/>
</dbReference>
<dbReference type="PROSITE" id="PS01108">
    <property type="entry name" value="RIBOSOMAL_L24"/>
    <property type="match status" value="1"/>
</dbReference>
<keyword id="KW-1185">Reference proteome</keyword>
<keyword id="KW-0687">Ribonucleoprotein</keyword>
<keyword id="KW-0689">Ribosomal protein</keyword>
<keyword id="KW-0694">RNA-binding</keyword>
<keyword id="KW-0699">rRNA-binding</keyword>
<accession>B0KCL1</accession>
<gene>
    <name evidence="1" type="primary">rplX</name>
    <name type="ordered locus">Teth39_0385</name>
</gene>
<feature type="chain" id="PRO_0000355724" description="Large ribosomal subunit protein uL24">
    <location>
        <begin position="1"/>
        <end position="107"/>
    </location>
</feature>
<protein>
    <recommendedName>
        <fullName evidence="1">Large ribosomal subunit protein uL24</fullName>
    </recommendedName>
    <alternativeName>
        <fullName evidence="2">50S ribosomal protein L24</fullName>
    </alternativeName>
</protein>
<name>RL24_THEP3</name>